<dbReference type="EMBL" id="CP000058">
    <property type="protein sequence ID" value="AAZ36912.1"/>
    <property type="molecule type" value="Genomic_DNA"/>
</dbReference>
<dbReference type="RefSeq" id="WP_002555031.1">
    <property type="nucleotide sequence ID" value="NC_005773.3"/>
</dbReference>
<dbReference type="SMR" id="Q48EH2"/>
<dbReference type="DIP" id="DIP-46419N"/>
<dbReference type="IntAct" id="Q48EH2">
    <property type="interactions" value="1"/>
</dbReference>
<dbReference type="KEGG" id="psp:PSPPH_4093"/>
<dbReference type="eggNOG" id="COG1666">
    <property type="taxonomic scope" value="Bacteria"/>
</dbReference>
<dbReference type="HOGENOM" id="CLU_099839_1_0_6"/>
<dbReference type="Proteomes" id="UP000000551">
    <property type="component" value="Chromosome"/>
</dbReference>
<dbReference type="GO" id="GO:0005829">
    <property type="term" value="C:cytosol"/>
    <property type="evidence" value="ECO:0007669"/>
    <property type="project" value="TreeGrafter"/>
</dbReference>
<dbReference type="GO" id="GO:0000166">
    <property type="term" value="F:nucleotide binding"/>
    <property type="evidence" value="ECO:0007669"/>
    <property type="project" value="TreeGrafter"/>
</dbReference>
<dbReference type="CDD" id="cd11740">
    <property type="entry name" value="YajQ_like"/>
    <property type="match status" value="1"/>
</dbReference>
<dbReference type="Gene3D" id="3.30.70.860">
    <property type="match status" value="1"/>
</dbReference>
<dbReference type="Gene3D" id="3.30.70.990">
    <property type="entry name" value="YajQ-like, domain 2"/>
    <property type="match status" value="1"/>
</dbReference>
<dbReference type="HAMAP" id="MF_00632">
    <property type="entry name" value="YajQ"/>
    <property type="match status" value="1"/>
</dbReference>
<dbReference type="InterPro" id="IPR007551">
    <property type="entry name" value="DUF520"/>
</dbReference>
<dbReference type="InterPro" id="IPR035571">
    <property type="entry name" value="UPF0234-like_C"/>
</dbReference>
<dbReference type="InterPro" id="IPR035570">
    <property type="entry name" value="UPF0234_N"/>
</dbReference>
<dbReference type="InterPro" id="IPR036183">
    <property type="entry name" value="YajQ-like_sf"/>
</dbReference>
<dbReference type="NCBIfam" id="NF003819">
    <property type="entry name" value="PRK05412.1"/>
    <property type="match status" value="1"/>
</dbReference>
<dbReference type="PANTHER" id="PTHR30476">
    <property type="entry name" value="UPF0234 PROTEIN YAJQ"/>
    <property type="match status" value="1"/>
</dbReference>
<dbReference type="PANTHER" id="PTHR30476:SF0">
    <property type="entry name" value="UPF0234 PROTEIN YAJQ"/>
    <property type="match status" value="1"/>
</dbReference>
<dbReference type="Pfam" id="PF04461">
    <property type="entry name" value="DUF520"/>
    <property type="match status" value="1"/>
</dbReference>
<dbReference type="SUPFAM" id="SSF89963">
    <property type="entry name" value="YajQ-like"/>
    <property type="match status" value="2"/>
</dbReference>
<gene>
    <name type="ordered locus">PSPPH_4093</name>
</gene>
<proteinExistence type="inferred from homology"/>
<feature type="chain" id="PRO_0000261963" description="Nucleotide-binding protein PSPPH_4093">
    <location>
        <begin position="1"/>
        <end position="159"/>
    </location>
</feature>
<sequence>MPSFDVVSELDKHEVTNAVDNAIKELDRRYDLKGKGTFEFKELTVTLTAEADFQLEAMIEILKLALVKRKIDAKCLEIKDAYASGKLMKQEVTLREGIDKELAKKIVAHIKEAKLKVQAAIQGEQVRVTGKKRDDLQEAIAALRAYDSGMPLQFNNFRD</sequence>
<protein>
    <recommendedName>
        <fullName evidence="1">Nucleotide-binding protein PSPPH_4093</fullName>
    </recommendedName>
</protein>
<organism>
    <name type="scientific">Pseudomonas savastanoi pv. phaseolicola (strain 1448A / Race 6)</name>
    <name type="common">Pseudomonas syringae pv. phaseolicola (strain 1448A / Race 6)</name>
    <dbReference type="NCBI Taxonomy" id="264730"/>
    <lineage>
        <taxon>Bacteria</taxon>
        <taxon>Pseudomonadati</taxon>
        <taxon>Pseudomonadota</taxon>
        <taxon>Gammaproteobacteria</taxon>
        <taxon>Pseudomonadales</taxon>
        <taxon>Pseudomonadaceae</taxon>
        <taxon>Pseudomonas</taxon>
    </lineage>
</organism>
<reference key="1">
    <citation type="journal article" date="2005" name="J. Bacteriol.">
        <title>Whole-genome sequence analysis of Pseudomonas syringae pv. phaseolicola 1448A reveals divergence among pathovars in genes involved in virulence and transposition.</title>
        <authorList>
            <person name="Joardar V."/>
            <person name="Lindeberg M."/>
            <person name="Jackson R.W."/>
            <person name="Selengut J."/>
            <person name="Dodson R."/>
            <person name="Brinkac L.M."/>
            <person name="Daugherty S.C."/>
            <person name="DeBoy R.T."/>
            <person name="Durkin A.S."/>
            <person name="Gwinn Giglio M."/>
            <person name="Madupu R."/>
            <person name="Nelson W.C."/>
            <person name="Rosovitz M.J."/>
            <person name="Sullivan S.A."/>
            <person name="Crabtree J."/>
            <person name="Creasy T."/>
            <person name="Davidsen T.M."/>
            <person name="Haft D.H."/>
            <person name="Zafar N."/>
            <person name="Zhou L."/>
            <person name="Halpin R."/>
            <person name="Holley T."/>
            <person name="Khouri H.M."/>
            <person name="Feldblyum T.V."/>
            <person name="White O."/>
            <person name="Fraser C.M."/>
            <person name="Chatterjee A.K."/>
            <person name="Cartinhour S."/>
            <person name="Schneider D."/>
            <person name="Mansfield J.W."/>
            <person name="Collmer A."/>
            <person name="Buell R."/>
        </authorList>
    </citation>
    <scope>NUCLEOTIDE SEQUENCE [LARGE SCALE GENOMIC DNA]</scope>
    <source>
        <strain>1448A / Race 6</strain>
    </source>
</reference>
<keyword id="KW-0547">Nucleotide-binding</keyword>
<comment type="function">
    <text evidence="1">Nucleotide-binding protein.</text>
</comment>
<comment type="similarity">
    <text evidence="1">Belongs to the YajQ family.</text>
</comment>
<name>Y4093_PSE14</name>
<accession>Q48EH2</accession>
<evidence type="ECO:0000255" key="1">
    <source>
        <dbReference type="HAMAP-Rule" id="MF_00632"/>
    </source>
</evidence>